<accession>Q47MY4</accession>
<name>LEXA_THEFY</name>
<organism>
    <name type="scientific">Thermobifida fusca (strain YX)</name>
    <dbReference type="NCBI Taxonomy" id="269800"/>
    <lineage>
        <taxon>Bacteria</taxon>
        <taxon>Bacillati</taxon>
        <taxon>Actinomycetota</taxon>
        <taxon>Actinomycetes</taxon>
        <taxon>Streptosporangiales</taxon>
        <taxon>Nocardiopsidaceae</taxon>
        <taxon>Thermobifida</taxon>
    </lineage>
</organism>
<feature type="chain" id="PRO_0000322769" description="LexA repressor">
    <location>
        <begin position="1"/>
        <end position="252"/>
    </location>
</feature>
<feature type="DNA-binding region" description="H-T-H motif" evidence="1">
    <location>
        <begin position="67"/>
        <end position="87"/>
    </location>
</feature>
<feature type="region of interest" description="Disordered" evidence="2">
    <location>
        <begin position="1"/>
        <end position="46"/>
    </location>
</feature>
<feature type="active site" description="For autocatalytic cleavage activity" evidence="1">
    <location>
        <position position="176"/>
    </location>
</feature>
<feature type="active site" description="For autocatalytic cleavage activity" evidence="1">
    <location>
        <position position="213"/>
    </location>
</feature>
<feature type="site" description="Cleavage; by autolysis" evidence="1">
    <location>
        <begin position="141"/>
        <end position="142"/>
    </location>
</feature>
<keyword id="KW-0068">Autocatalytic cleavage</keyword>
<keyword id="KW-0227">DNA damage</keyword>
<keyword id="KW-0234">DNA repair</keyword>
<keyword id="KW-0235">DNA replication</keyword>
<keyword id="KW-0238">DNA-binding</keyword>
<keyword id="KW-0378">Hydrolase</keyword>
<keyword id="KW-0678">Repressor</keyword>
<keyword id="KW-0742">SOS response</keyword>
<keyword id="KW-0804">Transcription</keyword>
<keyword id="KW-0805">Transcription regulation</keyword>
<evidence type="ECO:0000255" key="1">
    <source>
        <dbReference type="HAMAP-Rule" id="MF_00015"/>
    </source>
</evidence>
<evidence type="ECO:0000256" key="2">
    <source>
        <dbReference type="SAM" id="MobiDB-lite"/>
    </source>
</evidence>
<comment type="function">
    <text evidence="1">Represses a number of genes involved in the response to DNA damage (SOS response), including recA and lexA. In the presence of single-stranded DNA, RecA interacts with LexA causing an autocatalytic cleavage which disrupts the DNA-binding part of LexA, leading to derepression of the SOS regulon and eventually DNA repair.</text>
</comment>
<comment type="catalytic activity">
    <reaction evidence="1">
        <text>Hydrolysis of Ala-|-Gly bond in repressor LexA.</text>
        <dbReference type="EC" id="3.4.21.88"/>
    </reaction>
</comment>
<comment type="subunit">
    <text evidence="1">Homodimer.</text>
</comment>
<comment type="similarity">
    <text evidence="1">Belongs to the peptidase S24 family.</text>
</comment>
<dbReference type="EC" id="3.4.21.88" evidence="1"/>
<dbReference type="EMBL" id="CP000088">
    <property type="protein sequence ID" value="AAZ56185.1"/>
    <property type="molecule type" value="Genomic_DNA"/>
</dbReference>
<dbReference type="RefSeq" id="WP_011292575.1">
    <property type="nucleotide sequence ID" value="NC_007333.1"/>
</dbReference>
<dbReference type="SMR" id="Q47MY4"/>
<dbReference type="STRING" id="269800.Tfu_2152"/>
<dbReference type="MEROPS" id="S24.001"/>
<dbReference type="KEGG" id="tfu:Tfu_2152"/>
<dbReference type="eggNOG" id="COG1974">
    <property type="taxonomic scope" value="Bacteria"/>
</dbReference>
<dbReference type="HOGENOM" id="CLU_066192_45_0_11"/>
<dbReference type="OrthoDB" id="9802364at2"/>
<dbReference type="GO" id="GO:0003677">
    <property type="term" value="F:DNA binding"/>
    <property type="evidence" value="ECO:0007669"/>
    <property type="project" value="UniProtKB-UniRule"/>
</dbReference>
<dbReference type="GO" id="GO:0004252">
    <property type="term" value="F:serine-type endopeptidase activity"/>
    <property type="evidence" value="ECO:0007669"/>
    <property type="project" value="UniProtKB-UniRule"/>
</dbReference>
<dbReference type="GO" id="GO:0006281">
    <property type="term" value="P:DNA repair"/>
    <property type="evidence" value="ECO:0007669"/>
    <property type="project" value="UniProtKB-UniRule"/>
</dbReference>
<dbReference type="GO" id="GO:0006260">
    <property type="term" value="P:DNA replication"/>
    <property type="evidence" value="ECO:0007669"/>
    <property type="project" value="UniProtKB-UniRule"/>
</dbReference>
<dbReference type="GO" id="GO:0045892">
    <property type="term" value="P:negative regulation of DNA-templated transcription"/>
    <property type="evidence" value="ECO:0007669"/>
    <property type="project" value="UniProtKB-UniRule"/>
</dbReference>
<dbReference type="GO" id="GO:0006508">
    <property type="term" value="P:proteolysis"/>
    <property type="evidence" value="ECO:0007669"/>
    <property type="project" value="InterPro"/>
</dbReference>
<dbReference type="GO" id="GO:0009432">
    <property type="term" value="P:SOS response"/>
    <property type="evidence" value="ECO:0007669"/>
    <property type="project" value="UniProtKB-UniRule"/>
</dbReference>
<dbReference type="CDD" id="cd06529">
    <property type="entry name" value="S24_LexA-like"/>
    <property type="match status" value="1"/>
</dbReference>
<dbReference type="FunFam" id="1.10.10.10:FF:000009">
    <property type="entry name" value="LexA repressor"/>
    <property type="match status" value="1"/>
</dbReference>
<dbReference type="FunFam" id="2.10.109.10:FF:000001">
    <property type="entry name" value="LexA repressor"/>
    <property type="match status" value="1"/>
</dbReference>
<dbReference type="Gene3D" id="2.10.109.10">
    <property type="entry name" value="Umud Fragment, subunit A"/>
    <property type="match status" value="1"/>
</dbReference>
<dbReference type="Gene3D" id="1.10.10.10">
    <property type="entry name" value="Winged helix-like DNA-binding domain superfamily/Winged helix DNA-binding domain"/>
    <property type="match status" value="1"/>
</dbReference>
<dbReference type="HAMAP" id="MF_00015">
    <property type="entry name" value="LexA"/>
    <property type="match status" value="1"/>
</dbReference>
<dbReference type="InterPro" id="IPR006200">
    <property type="entry name" value="LexA"/>
</dbReference>
<dbReference type="InterPro" id="IPR039418">
    <property type="entry name" value="LexA-like"/>
</dbReference>
<dbReference type="InterPro" id="IPR036286">
    <property type="entry name" value="LexA/Signal_pep-like_sf"/>
</dbReference>
<dbReference type="InterPro" id="IPR006199">
    <property type="entry name" value="LexA_DNA-bd_dom"/>
</dbReference>
<dbReference type="InterPro" id="IPR050077">
    <property type="entry name" value="LexA_repressor"/>
</dbReference>
<dbReference type="InterPro" id="IPR006197">
    <property type="entry name" value="Peptidase_S24_LexA"/>
</dbReference>
<dbReference type="InterPro" id="IPR015927">
    <property type="entry name" value="Peptidase_S24_S26A/B/C"/>
</dbReference>
<dbReference type="InterPro" id="IPR036388">
    <property type="entry name" value="WH-like_DNA-bd_sf"/>
</dbReference>
<dbReference type="InterPro" id="IPR036390">
    <property type="entry name" value="WH_DNA-bd_sf"/>
</dbReference>
<dbReference type="NCBIfam" id="TIGR00498">
    <property type="entry name" value="lexA"/>
    <property type="match status" value="1"/>
</dbReference>
<dbReference type="PANTHER" id="PTHR33516">
    <property type="entry name" value="LEXA REPRESSOR"/>
    <property type="match status" value="1"/>
</dbReference>
<dbReference type="PANTHER" id="PTHR33516:SF2">
    <property type="entry name" value="LEXA REPRESSOR-RELATED"/>
    <property type="match status" value="1"/>
</dbReference>
<dbReference type="Pfam" id="PF01726">
    <property type="entry name" value="LexA_DNA_bind"/>
    <property type="match status" value="1"/>
</dbReference>
<dbReference type="Pfam" id="PF00717">
    <property type="entry name" value="Peptidase_S24"/>
    <property type="match status" value="1"/>
</dbReference>
<dbReference type="PRINTS" id="PR00726">
    <property type="entry name" value="LEXASERPTASE"/>
</dbReference>
<dbReference type="SUPFAM" id="SSF51306">
    <property type="entry name" value="LexA/Signal peptidase"/>
    <property type="match status" value="1"/>
</dbReference>
<dbReference type="SUPFAM" id="SSF46785">
    <property type="entry name" value="Winged helix' DNA-binding domain"/>
    <property type="match status" value="1"/>
</dbReference>
<sequence>MPEENRGGHQPYTEESSVSALHPVRTDDSVGSSAEQTGDAPTLTERQRSVLNVIHRYVRERGYPPSIREIGEAVGLSSPSSVAHQLKVLQRKGYLHRDQNRPRAVEIRIPHKTSGRTRRELGGLSGSEEIVDIPLLGRIAAGGPILAEEHVEDVLSLPRQLVGEGTLFMLTVVGDSMIDAAIADGDLVVVRQQPDANNGDIVAALLGDEATVKVFKRDREHVWLLPRNSAYDPINGDSATILGKVVTVLRKV</sequence>
<protein>
    <recommendedName>
        <fullName evidence="1">LexA repressor</fullName>
        <ecNumber evidence="1">3.4.21.88</ecNumber>
    </recommendedName>
</protein>
<gene>
    <name evidence="1" type="primary">lexA</name>
    <name type="ordered locus">Tfu_2152</name>
</gene>
<proteinExistence type="inferred from homology"/>
<reference key="1">
    <citation type="journal article" date="2007" name="J. Bacteriol.">
        <title>Genome sequence and analysis of the soil cellulolytic actinomycete Thermobifida fusca YX.</title>
        <authorList>
            <person name="Lykidis A."/>
            <person name="Mavromatis K."/>
            <person name="Ivanova N."/>
            <person name="Anderson I."/>
            <person name="Land M."/>
            <person name="DiBartolo G."/>
            <person name="Martinez M."/>
            <person name="Lapidus A."/>
            <person name="Lucas S."/>
            <person name="Copeland A."/>
            <person name="Richardson P."/>
            <person name="Wilson D.B."/>
            <person name="Kyrpides N."/>
        </authorList>
    </citation>
    <scope>NUCLEOTIDE SEQUENCE [LARGE SCALE GENOMIC DNA]</scope>
    <source>
        <strain>YX</strain>
    </source>
</reference>